<feature type="chain" id="PRO_1000189060" description="Cytochrome c-type biogenesis protein CcmE">
    <location>
        <begin position="1"/>
        <end position="133"/>
    </location>
</feature>
<feature type="topological domain" description="Cytoplasmic" evidence="1">
    <location>
        <begin position="1"/>
        <end position="7"/>
    </location>
</feature>
<feature type="transmembrane region" description="Helical; Signal-anchor for type II membrane protein" evidence="1">
    <location>
        <begin position="8"/>
        <end position="28"/>
    </location>
</feature>
<feature type="topological domain" description="Periplasmic" evidence="1">
    <location>
        <begin position="29"/>
        <end position="133"/>
    </location>
</feature>
<feature type="binding site" description="covalent" evidence="1">
    <location>
        <position position="120"/>
    </location>
    <ligand>
        <name>heme</name>
        <dbReference type="ChEBI" id="CHEBI:30413"/>
    </ligand>
</feature>
<feature type="binding site" description="axial binding residue" evidence="1">
    <location>
        <position position="124"/>
    </location>
    <ligand>
        <name>heme</name>
        <dbReference type="ChEBI" id="CHEBI:30413"/>
    </ligand>
    <ligandPart>
        <name>Fe</name>
        <dbReference type="ChEBI" id="CHEBI:18248"/>
    </ligandPart>
</feature>
<comment type="function">
    <text evidence="1">Heme chaperone required for the biogenesis of c-type cytochromes. Transiently binds heme delivered by CcmC and transfers the heme to apo-cytochromes in a process facilitated by CcmF and CcmH.</text>
</comment>
<comment type="subcellular location">
    <subcellularLocation>
        <location evidence="1">Cell inner membrane</location>
        <topology evidence="1">Single-pass type II membrane protein</topology>
        <orientation evidence="1">Periplasmic side</orientation>
    </subcellularLocation>
</comment>
<comment type="similarity">
    <text evidence="1">Belongs to the CcmE/CycJ family.</text>
</comment>
<dbReference type="EMBL" id="CP001391">
    <property type="protein sequence ID" value="ACN95639.1"/>
    <property type="molecule type" value="Genomic_DNA"/>
</dbReference>
<dbReference type="RefSeq" id="WP_012673317.1">
    <property type="nucleotide sequence ID" value="NZ_MKIF01000063.1"/>
</dbReference>
<dbReference type="SMR" id="C0R3Z7"/>
<dbReference type="STRING" id="66084.WRi_009180"/>
<dbReference type="KEGG" id="wri:WRi_009180"/>
<dbReference type="HOGENOM" id="CLU_079503_1_1_5"/>
<dbReference type="Proteomes" id="UP000001293">
    <property type="component" value="Chromosome"/>
</dbReference>
<dbReference type="GO" id="GO:0005886">
    <property type="term" value="C:plasma membrane"/>
    <property type="evidence" value="ECO:0007669"/>
    <property type="project" value="UniProtKB-SubCell"/>
</dbReference>
<dbReference type="GO" id="GO:0020037">
    <property type="term" value="F:heme binding"/>
    <property type="evidence" value="ECO:0007669"/>
    <property type="project" value="InterPro"/>
</dbReference>
<dbReference type="GO" id="GO:0046872">
    <property type="term" value="F:metal ion binding"/>
    <property type="evidence" value="ECO:0007669"/>
    <property type="project" value="UniProtKB-KW"/>
</dbReference>
<dbReference type="GO" id="GO:0017004">
    <property type="term" value="P:cytochrome complex assembly"/>
    <property type="evidence" value="ECO:0007669"/>
    <property type="project" value="UniProtKB-KW"/>
</dbReference>
<dbReference type="Gene3D" id="2.40.50.140">
    <property type="entry name" value="Nucleic acid-binding proteins"/>
    <property type="match status" value="1"/>
</dbReference>
<dbReference type="HAMAP" id="MF_01959">
    <property type="entry name" value="CcmE"/>
    <property type="match status" value="1"/>
</dbReference>
<dbReference type="InterPro" id="IPR004329">
    <property type="entry name" value="CcmE"/>
</dbReference>
<dbReference type="InterPro" id="IPR036127">
    <property type="entry name" value="CcmE-like_sf"/>
</dbReference>
<dbReference type="InterPro" id="IPR012340">
    <property type="entry name" value="NA-bd_OB-fold"/>
</dbReference>
<dbReference type="NCBIfam" id="NF009727">
    <property type="entry name" value="PRK13254.1-1"/>
    <property type="match status" value="1"/>
</dbReference>
<dbReference type="PANTHER" id="PTHR34128">
    <property type="entry name" value="CYTOCHROME C-TYPE BIOGENESIS PROTEIN CCME HOMOLOG, MITOCHONDRIAL"/>
    <property type="match status" value="1"/>
</dbReference>
<dbReference type="PANTHER" id="PTHR34128:SF2">
    <property type="entry name" value="CYTOCHROME C-TYPE BIOGENESIS PROTEIN CCME HOMOLOG, MITOCHONDRIAL"/>
    <property type="match status" value="1"/>
</dbReference>
<dbReference type="Pfam" id="PF03100">
    <property type="entry name" value="CcmE"/>
    <property type="match status" value="1"/>
</dbReference>
<dbReference type="SUPFAM" id="SSF82093">
    <property type="entry name" value="Heme chaperone CcmE"/>
    <property type="match status" value="1"/>
</dbReference>
<accession>C0R3Z7</accession>
<gene>
    <name evidence="1" type="primary">ccmE</name>
    <name evidence="1" type="synonym">cycJ</name>
    <name type="ordered locus">WRi_009180</name>
</gene>
<organism>
    <name type="scientific">Wolbachia sp. subsp. Drosophila simulans (strain wRi)</name>
    <dbReference type="NCBI Taxonomy" id="66084"/>
    <lineage>
        <taxon>Bacteria</taxon>
        <taxon>Pseudomonadati</taxon>
        <taxon>Pseudomonadota</taxon>
        <taxon>Alphaproteobacteria</taxon>
        <taxon>Rickettsiales</taxon>
        <taxon>Anaplasmataceae</taxon>
        <taxon>Wolbachieae</taxon>
        <taxon>Wolbachia</taxon>
    </lineage>
</organism>
<proteinExistence type="inferred from homology"/>
<sequence>MKKKHKRLLITSGIFCFLSCIVFFILTTLKENISFFYTVSEAIVLQNSQKLIRVGGMVVENSVIRSESEVIFQMTDFNKSVVVKYQGILPPMFSEKSGVVVQGKMFDNSTFLADTVFAKHDENYMPKVLKQIP</sequence>
<reference key="1">
    <citation type="journal article" date="2009" name="Proc. Natl. Acad. Sci. U.S.A.">
        <title>The mosaic genome structure of the Wolbachia wRi strain infecting Drosophila simulans.</title>
        <authorList>
            <person name="Klasson L."/>
            <person name="Westberg J."/>
            <person name="Sapountzis P."/>
            <person name="Naeslund K."/>
            <person name="Lutnaes Y."/>
            <person name="Darby A.C."/>
            <person name="Veneti Z."/>
            <person name="Chen L."/>
            <person name="Braig H.R."/>
            <person name="Garrett R."/>
            <person name="Bourtzis K."/>
            <person name="Andersson S.G."/>
        </authorList>
    </citation>
    <scope>NUCLEOTIDE SEQUENCE [LARGE SCALE GENOMIC DNA]</scope>
    <source>
        <strain>wRi</strain>
    </source>
</reference>
<keyword id="KW-0997">Cell inner membrane</keyword>
<keyword id="KW-1003">Cell membrane</keyword>
<keyword id="KW-0201">Cytochrome c-type biogenesis</keyword>
<keyword id="KW-0349">Heme</keyword>
<keyword id="KW-0408">Iron</keyword>
<keyword id="KW-0472">Membrane</keyword>
<keyword id="KW-0479">Metal-binding</keyword>
<keyword id="KW-0735">Signal-anchor</keyword>
<keyword id="KW-0812">Transmembrane</keyword>
<keyword id="KW-1133">Transmembrane helix</keyword>
<name>CCME_WOLWR</name>
<evidence type="ECO:0000255" key="1">
    <source>
        <dbReference type="HAMAP-Rule" id="MF_01959"/>
    </source>
</evidence>
<protein>
    <recommendedName>
        <fullName evidence="1">Cytochrome c-type biogenesis protein CcmE</fullName>
    </recommendedName>
    <alternativeName>
        <fullName evidence="1">Cytochrome c maturation protein E</fullName>
    </alternativeName>
    <alternativeName>
        <fullName evidence="1">Heme chaperone CcmE</fullName>
    </alternativeName>
</protein>